<organism>
    <name type="scientific">Roseobacter denitrificans (strain ATCC 33942 / OCh 114)</name>
    <name type="common">Erythrobacter sp. (strain OCh 114)</name>
    <name type="synonym">Roseobacter denitrificans</name>
    <dbReference type="NCBI Taxonomy" id="375451"/>
    <lineage>
        <taxon>Bacteria</taxon>
        <taxon>Pseudomonadati</taxon>
        <taxon>Pseudomonadota</taxon>
        <taxon>Alphaproteobacteria</taxon>
        <taxon>Rhodobacterales</taxon>
        <taxon>Roseobacteraceae</taxon>
        <taxon>Roseobacter</taxon>
    </lineage>
</organism>
<reference key="1">
    <citation type="journal article" date="2007" name="J. Bacteriol.">
        <title>The complete genome sequence of Roseobacter denitrificans reveals a mixotrophic rather than photosynthetic metabolism.</title>
        <authorList>
            <person name="Swingley W.D."/>
            <person name="Sadekar S."/>
            <person name="Mastrian S.D."/>
            <person name="Matthies H.J."/>
            <person name="Hao J."/>
            <person name="Ramos H."/>
            <person name="Acharya C.R."/>
            <person name="Conrad A.L."/>
            <person name="Taylor H.L."/>
            <person name="Dejesa L.C."/>
            <person name="Shah M.K."/>
            <person name="O'Huallachain M.E."/>
            <person name="Lince M.T."/>
            <person name="Blankenship R.E."/>
            <person name="Beatty J.T."/>
            <person name="Touchman J.W."/>
        </authorList>
    </citation>
    <scope>NUCLEOTIDE SEQUENCE [LARGE SCALE GENOMIC DNA]</scope>
    <source>
        <strain>ATCC 33942 / OCh 114</strain>
    </source>
</reference>
<proteinExistence type="inferred from homology"/>
<keyword id="KW-0028">Amino-acid biosynthesis</keyword>
<keyword id="KW-0057">Aromatic amino acid biosynthesis</keyword>
<keyword id="KW-0328">Glycosyltransferase</keyword>
<keyword id="KW-0460">Magnesium</keyword>
<keyword id="KW-0479">Metal-binding</keyword>
<keyword id="KW-1185">Reference proteome</keyword>
<keyword id="KW-0808">Transferase</keyword>
<keyword id="KW-0822">Tryptophan biosynthesis</keyword>
<gene>
    <name evidence="1" type="primary">trpD</name>
    <name type="ordered locus">RD1_3210</name>
</gene>
<evidence type="ECO:0000255" key="1">
    <source>
        <dbReference type="HAMAP-Rule" id="MF_00211"/>
    </source>
</evidence>
<evidence type="ECO:0000305" key="2"/>
<accession>Q163Y0</accession>
<comment type="function">
    <text evidence="1">Catalyzes the transfer of the phosphoribosyl group of 5-phosphorylribose-1-pyrophosphate (PRPP) to anthranilate to yield N-(5'-phosphoribosyl)-anthranilate (PRA).</text>
</comment>
<comment type="catalytic activity">
    <reaction evidence="1">
        <text>N-(5-phospho-beta-D-ribosyl)anthranilate + diphosphate = 5-phospho-alpha-D-ribose 1-diphosphate + anthranilate</text>
        <dbReference type="Rhea" id="RHEA:11768"/>
        <dbReference type="ChEBI" id="CHEBI:16567"/>
        <dbReference type="ChEBI" id="CHEBI:18277"/>
        <dbReference type="ChEBI" id="CHEBI:33019"/>
        <dbReference type="ChEBI" id="CHEBI:58017"/>
        <dbReference type="EC" id="2.4.2.18"/>
    </reaction>
</comment>
<comment type="cofactor">
    <cofactor evidence="1">
        <name>Mg(2+)</name>
        <dbReference type="ChEBI" id="CHEBI:18420"/>
    </cofactor>
    <text evidence="1">Binds 2 magnesium ions per monomer.</text>
</comment>
<comment type="pathway">
    <text evidence="1">Amino-acid biosynthesis; L-tryptophan biosynthesis; L-tryptophan from chorismate: step 2/5.</text>
</comment>
<comment type="subunit">
    <text evidence="1">Homodimer.</text>
</comment>
<comment type="similarity">
    <text evidence="1">Belongs to the anthranilate phosphoribosyltransferase family.</text>
</comment>
<comment type="sequence caution" evidence="2">
    <conflict type="erroneous initiation">
        <sequence resource="EMBL-CDS" id="ABG32713"/>
    </conflict>
    <text>Truncated N-terminus.</text>
</comment>
<dbReference type="EC" id="2.4.2.18" evidence="1"/>
<dbReference type="EMBL" id="CP000362">
    <property type="protein sequence ID" value="ABG32713.1"/>
    <property type="status" value="ALT_INIT"/>
    <property type="molecule type" value="Genomic_DNA"/>
</dbReference>
<dbReference type="RefSeq" id="WP_044033177.1">
    <property type="nucleotide sequence ID" value="NC_008209.1"/>
</dbReference>
<dbReference type="SMR" id="Q163Y0"/>
<dbReference type="STRING" id="375451.RD1_3210"/>
<dbReference type="KEGG" id="rde:RD1_3210"/>
<dbReference type="eggNOG" id="COG0547">
    <property type="taxonomic scope" value="Bacteria"/>
</dbReference>
<dbReference type="HOGENOM" id="CLU_034315_2_1_5"/>
<dbReference type="OrthoDB" id="9806430at2"/>
<dbReference type="UniPathway" id="UPA00035">
    <property type="reaction ID" value="UER00041"/>
</dbReference>
<dbReference type="Proteomes" id="UP000007029">
    <property type="component" value="Chromosome"/>
</dbReference>
<dbReference type="GO" id="GO:0005829">
    <property type="term" value="C:cytosol"/>
    <property type="evidence" value="ECO:0007669"/>
    <property type="project" value="TreeGrafter"/>
</dbReference>
<dbReference type="GO" id="GO:0004048">
    <property type="term" value="F:anthranilate phosphoribosyltransferase activity"/>
    <property type="evidence" value="ECO:0007669"/>
    <property type="project" value="UniProtKB-UniRule"/>
</dbReference>
<dbReference type="GO" id="GO:0000287">
    <property type="term" value="F:magnesium ion binding"/>
    <property type="evidence" value="ECO:0007669"/>
    <property type="project" value="UniProtKB-UniRule"/>
</dbReference>
<dbReference type="GO" id="GO:0000162">
    <property type="term" value="P:L-tryptophan biosynthetic process"/>
    <property type="evidence" value="ECO:0007669"/>
    <property type="project" value="UniProtKB-UniRule"/>
</dbReference>
<dbReference type="FunFam" id="3.40.1030.10:FF:000002">
    <property type="entry name" value="Anthranilate phosphoribosyltransferase"/>
    <property type="match status" value="1"/>
</dbReference>
<dbReference type="Gene3D" id="3.40.1030.10">
    <property type="entry name" value="Nucleoside phosphorylase/phosphoribosyltransferase catalytic domain"/>
    <property type="match status" value="1"/>
</dbReference>
<dbReference type="Gene3D" id="1.20.970.10">
    <property type="entry name" value="Transferase, Pyrimidine Nucleoside Phosphorylase, Chain C"/>
    <property type="match status" value="1"/>
</dbReference>
<dbReference type="HAMAP" id="MF_00211">
    <property type="entry name" value="TrpD"/>
    <property type="match status" value="1"/>
</dbReference>
<dbReference type="InterPro" id="IPR005940">
    <property type="entry name" value="Anthranilate_Pribosyl_Tfrase"/>
</dbReference>
<dbReference type="InterPro" id="IPR000312">
    <property type="entry name" value="Glycosyl_Trfase_fam3"/>
</dbReference>
<dbReference type="InterPro" id="IPR017459">
    <property type="entry name" value="Glycosyl_Trfase_fam3_N_dom"/>
</dbReference>
<dbReference type="InterPro" id="IPR036320">
    <property type="entry name" value="Glycosyl_Trfase_fam3_N_dom_sf"/>
</dbReference>
<dbReference type="InterPro" id="IPR035902">
    <property type="entry name" value="Nuc_phospho_transferase"/>
</dbReference>
<dbReference type="NCBIfam" id="TIGR01245">
    <property type="entry name" value="trpD"/>
    <property type="match status" value="1"/>
</dbReference>
<dbReference type="PANTHER" id="PTHR43285">
    <property type="entry name" value="ANTHRANILATE PHOSPHORIBOSYLTRANSFERASE"/>
    <property type="match status" value="1"/>
</dbReference>
<dbReference type="PANTHER" id="PTHR43285:SF2">
    <property type="entry name" value="ANTHRANILATE PHOSPHORIBOSYLTRANSFERASE"/>
    <property type="match status" value="1"/>
</dbReference>
<dbReference type="Pfam" id="PF02885">
    <property type="entry name" value="Glycos_trans_3N"/>
    <property type="match status" value="1"/>
</dbReference>
<dbReference type="Pfam" id="PF00591">
    <property type="entry name" value="Glycos_transf_3"/>
    <property type="match status" value="1"/>
</dbReference>
<dbReference type="SUPFAM" id="SSF52418">
    <property type="entry name" value="Nucleoside phosphorylase/phosphoribosyltransferase catalytic domain"/>
    <property type="match status" value="1"/>
</dbReference>
<dbReference type="SUPFAM" id="SSF47648">
    <property type="entry name" value="Nucleoside phosphorylase/phosphoribosyltransferase N-terminal domain"/>
    <property type="match status" value="1"/>
</dbReference>
<protein>
    <recommendedName>
        <fullName evidence="1">Anthranilate phosphoribosyltransferase</fullName>
        <ecNumber evidence="1">2.4.2.18</ecNumber>
    </recommendedName>
</protein>
<feature type="chain" id="PRO_0000325458" description="Anthranilate phosphoribosyltransferase">
    <location>
        <begin position="1"/>
        <end position="339"/>
    </location>
</feature>
<feature type="binding site" evidence="1">
    <location>
        <position position="81"/>
    </location>
    <ligand>
        <name>5-phospho-alpha-D-ribose 1-diphosphate</name>
        <dbReference type="ChEBI" id="CHEBI:58017"/>
    </ligand>
</feature>
<feature type="binding site" evidence="1">
    <location>
        <position position="81"/>
    </location>
    <ligand>
        <name>anthranilate</name>
        <dbReference type="ChEBI" id="CHEBI:16567"/>
        <label>1</label>
    </ligand>
</feature>
<feature type="binding site" evidence="1">
    <location>
        <begin position="84"/>
        <end position="85"/>
    </location>
    <ligand>
        <name>5-phospho-alpha-D-ribose 1-diphosphate</name>
        <dbReference type="ChEBI" id="CHEBI:58017"/>
    </ligand>
</feature>
<feature type="binding site" evidence="1">
    <location>
        <position position="89"/>
    </location>
    <ligand>
        <name>5-phospho-alpha-D-ribose 1-diphosphate</name>
        <dbReference type="ChEBI" id="CHEBI:58017"/>
    </ligand>
</feature>
<feature type="binding site" evidence="1">
    <location>
        <begin position="91"/>
        <end position="94"/>
    </location>
    <ligand>
        <name>5-phospho-alpha-D-ribose 1-diphosphate</name>
        <dbReference type="ChEBI" id="CHEBI:58017"/>
    </ligand>
</feature>
<feature type="binding site" evidence="1">
    <location>
        <position position="93"/>
    </location>
    <ligand>
        <name>Mg(2+)</name>
        <dbReference type="ChEBI" id="CHEBI:18420"/>
        <label>1</label>
    </ligand>
</feature>
<feature type="binding site" evidence="1">
    <location>
        <begin position="109"/>
        <end position="117"/>
    </location>
    <ligand>
        <name>5-phospho-alpha-D-ribose 1-diphosphate</name>
        <dbReference type="ChEBI" id="CHEBI:58017"/>
    </ligand>
</feature>
<feature type="binding site" evidence="1">
    <location>
        <position position="112"/>
    </location>
    <ligand>
        <name>anthranilate</name>
        <dbReference type="ChEBI" id="CHEBI:16567"/>
        <label>1</label>
    </ligand>
</feature>
<feature type="binding site" evidence="1">
    <location>
        <position position="121"/>
    </location>
    <ligand>
        <name>5-phospho-alpha-D-ribose 1-diphosphate</name>
        <dbReference type="ChEBI" id="CHEBI:58017"/>
    </ligand>
</feature>
<feature type="binding site" evidence="1">
    <location>
        <position position="167"/>
    </location>
    <ligand>
        <name>anthranilate</name>
        <dbReference type="ChEBI" id="CHEBI:16567"/>
        <label>2</label>
    </ligand>
</feature>
<feature type="binding site" evidence="1">
    <location>
        <position position="226"/>
    </location>
    <ligand>
        <name>Mg(2+)</name>
        <dbReference type="ChEBI" id="CHEBI:18420"/>
        <label>2</label>
    </ligand>
</feature>
<feature type="binding site" evidence="1">
    <location>
        <position position="227"/>
    </location>
    <ligand>
        <name>Mg(2+)</name>
        <dbReference type="ChEBI" id="CHEBI:18420"/>
        <label>1</label>
    </ligand>
</feature>
<feature type="binding site" evidence="1">
    <location>
        <position position="227"/>
    </location>
    <ligand>
        <name>Mg(2+)</name>
        <dbReference type="ChEBI" id="CHEBI:18420"/>
        <label>2</label>
    </ligand>
</feature>
<name>TRPD_ROSDO</name>
<sequence>MSDALKPLIGAAADRALSRAEAEDAFRILFEGEATPSQIGGFLMALRTRGETVAEYAAAASVMRAKCNAVKAPAGAMDIVGTGGDGKGTLNISTATAFVVAGAGVVVAKHGNRNLSSKSGAADALSQMGLNVMVGPEVVERALAEAGIGFMMAPMHHPAIAHVMPTRAELGTRTIFNILGPLTNPAGVKRQLTGAFSRDLIRPMAQTLGALGSEKAWLVHGSDGTDELTITGVSWVAALGPDGSVTDMEIHPEDAGLPVHPFEAIVGGTPAQNAADFKALLAGEASAYRDAVLLNAAAALVVADAASTLQDGVEMAATSIDSGAAARKIEAVAQITQAT</sequence>